<dbReference type="EMBL" id="CP017630">
    <property type="protein sequence ID" value="AOW31073.1"/>
    <property type="molecule type" value="Genomic_DNA"/>
</dbReference>
<dbReference type="RefSeq" id="XP_713220.1">
    <property type="nucleotide sequence ID" value="XM_708127.1"/>
</dbReference>
<dbReference type="SMR" id="Q59UH7"/>
<dbReference type="STRING" id="237561.Q59UH7"/>
<dbReference type="EnsemblFungi" id="CR_03350C_A-T">
    <property type="protein sequence ID" value="CR_03350C_A-T-p1"/>
    <property type="gene ID" value="CR_03350C_A"/>
</dbReference>
<dbReference type="GeneID" id="3645142"/>
<dbReference type="KEGG" id="cal:CAALFM_CR03350CA"/>
<dbReference type="CGD" id="CAL0000179030">
    <property type="gene designation" value="orf19.9923"/>
</dbReference>
<dbReference type="VEuPathDB" id="FungiDB:CR_03350C_A"/>
<dbReference type="eggNOG" id="ENOG502RGZN">
    <property type="taxonomic scope" value="Eukaryota"/>
</dbReference>
<dbReference type="HOGENOM" id="CLU_454918_0_0_1"/>
<dbReference type="InParanoid" id="Q59UH7"/>
<dbReference type="OrthoDB" id="107372at2759"/>
<dbReference type="PRO" id="PR:Q59UH7"/>
<dbReference type="Proteomes" id="UP000000559">
    <property type="component" value="Chromosome R"/>
</dbReference>
<dbReference type="GO" id="GO:0005743">
    <property type="term" value="C:mitochondrial inner membrane"/>
    <property type="evidence" value="ECO:0007669"/>
    <property type="project" value="UniProtKB-SubCell"/>
</dbReference>
<dbReference type="GO" id="GO:0005739">
    <property type="term" value="C:mitochondrion"/>
    <property type="evidence" value="ECO:0000318"/>
    <property type="project" value="GO_Central"/>
</dbReference>
<dbReference type="GO" id="GO:0004827">
    <property type="term" value="F:proline-tRNA ligase activity"/>
    <property type="evidence" value="ECO:0000303"/>
    <property type="project" value="CGD"/>
</dbReference>
<dbReference type="GO" id="GO:0140053">
    <property type="term" value="P:mitochondrial gene expression"/>
    <property type="evidence" value="ECO:0007669"/>
    <property type="project" value="InterPro"/>
</dbReference>
<dbReference type="GO" id="GO:0048255">
    <property type="term" value="P:mRNA stabilization"/>
    <property type="evidence" value="ECO:0000318"/>
    <property type="project" value="GO_Central"/>
</dbReference>
<dbReference type="GO" id="GO:0006433">
    <property type="term" value="P:prolyl-tRNA aminoacylation"/>
    <property type="evidence" value="ECO:0000303"/>
    <property type="project" value="CGD"/>
</dbReference>
<dbReference type="Gene3D" id="3.30.460.10">
    <property type="entry name" value="Beta Polymerase, domain 2"/>
    <property type="match status" value="1"/>
</dbReference>
<dbReference type="InterPro" id="IPR040152">
    <property type="entry name" value="Atp25"/>
</dbReference>
<dbReference type="InterPro" id="IPR043519">
    <property type="entry name" value="NT_sf"/>
</dbReference>
<dbReference type="PANTHER" id="PTHR28087">
    <property type="entry name" value="ATPASE SYNTHESIS PROTEIN 25, MITOCHONDRIAL"/>
    <property type="match status" value="1"/>
</dbReference>
<dbReference type="PANTHER" id="PTHR28087:SF1">
    <property type="entry name" value="ATPASE SYNTHESIS PROTEIN 25, MITOCHONDRIAL"/>
    <property type="match status" value="1"/>
</dbReference>
<dbReference type="Pfam" id="PF02410">
    <property type="entry name" value="RsfS"/>
    <property type="match status" value="1"/>
</dbReference>
<dbReference type="SUPFAM" id="SSF81301">
    <property type="entry name" value="Nucleotidyltransferase"/>
    <property type="match status" value="1"/>
</dbReference>
<reference key="1">
    <citation type="journal article" date="2004" name="Proc. Natl. Acad. Sci. U.S.A.">
        <title>The diploid genome sequence of Candida albicans.</title>
        <authorList>
            <person name="Jones T."/>
            <person name="Federspiel N.A."/>
            <person name="Chibana H."/>
            <person name="Dungan J."/>
            <person name="Kalman S."/>
            <person name="Magee B.B."/>
            <person name="Newport G."/>
            <person name="Thorstenson Y.R."/>
            <person name="Agabian N."/>
            <person name="Magee P.T."/>
            <person name="Davis R.W."/>
            <person name="Scherer S."/>
        </authorList>
    </citation>
    <scope>NUCLEOTIDE SEQUENCE [LARGE SCALE GENOMIC DNA]</scope>
    <source>
        <strain>SC5314 / ATCC MYA-2876</strain>
    </source>
</reference>
<reference key="2">
    <citation type="journal article" date="2007" name="Genome Biol.">
        <title>Assembly of the Candida albicans genome into sixteen supercontigs aligned on the eight chromosomes.</title>
        <authorList>
            <person name="van het Hoog M."/>
            <person name="Rast T.J."/>
            <person name="Martchenko M."/>
            <person name="Grindle S."/>
            <person name="Dignard D."/>
            <person name="Hogues H."/>
            <person name="Cuomo C."/>
            <person name="Berriman M."/>
            <person name="Scherer S."/>
            <person name="Magee B.B."/>
            <person name="Whiteway M."/>
            <person name="Chibana H."/>
            <person name="Nantel A."/>
            <person name="Magee P.T."/>
        </authorList>
    </citation>
    <scope>GENOME REANNOTATION</scope>
    <source>
        <strain>SC5314 / ATCC MYA-2876</strain>
    </source>
</reference>
<reference key="3">
    <citation type="journal article" date="2013" name="Genome Biol.">
        <title>Assembly of a phased diploid Candida albicans genome facilitates allele-specific measurements and provides a simple model for repeat and indel structure.</title>
        <authorList>
            <person name="Muzzey D."/>
            <person name="Schwartz K."/>
            <person name="Weissman J.S."/>
            <person name="Sherlock G."/>
        </authorList>
    </citation>
    <scope>NUCLEOTIDE SEQUENCE [LARGE SCALE GENOMIC DNA]</scope>
    <scope>GENOME REANNOTATION</scope>
    <source>
        <strain>SC5314 / ATCC MYA-2876</strain>
    </source>
</reference>
<organism>
    <name type="scientific">Candida albicans (strain SC5314 / ATCC MYA-2876)</name>
    <name type="common">Yeast</name>
    <dbReference type="NCBI Taxonomy" id="237561"/>
    <lineage>
        <taxon>Eukaryota</taxon>
        <taxon>Fungi</taxon>
        <taxon>Dikarya</taxon>
        <taxon>Ascomycota</taxon>
        <taxon>Saccharomycotina</taxon>
        <taxon>Pichiomycetes</taxon>
        <taxon>Debaryomycetaceae</taxon>
        <taxon>Candida/Lodderomyces clade</taxon>
        <taxon>Candida</taxon>
    </lineage>
</organism>
<feature type="transit peptide" description="Mitochondrion" evidence="2">
    <location>
        <begin position="1"/>
        <end position="38"/>
    </location>
</feature>
<feature type="chain" id="PRO_0000404463" description="ATPase synthesis protein 25, mitochondrial">
    <location>
        <begin position="39"/>
        <end position="580"/>
    </location>
</feature>
<keyword id="KW-0472">Membrane</keyword>
<keyword id="KW-0496">Mitochondrion</keyword>
<keyword id="KW-0999">Mitochondrion inner membrane</keyword>
<keyword id="KW-1185">Reference proteome</keyword>
<keyword id="KW-0809">Transit peptide</keyword>
<sequence length="580" mass="66837">MIVRGKCLGRSVSKAVSLFSRPISVISAKSFATTTNLLQNSKDDSTEATIPWYMREENSSPVEVLNKIEVPELPENSPQSLQEFVTLLTVEYGLTDLEIFDLSQLPEDHPKSLEEQNEENYVILASGKSEKHIYKAAYELRLYIKHTYKHLPIIEGMSSNSISKVTRRRLAKRVRRGPPATASTFGIGANSWVSCGTGVDGIVIHLLSRERRESLNLEQLYSDEQENEESHSTPEIDQDRLFFGDRRGFHTSSRNFNLNTLSNIYDSYVIDGNFDTSQKFKAQFDLNFKGGSVEEYNKKFELYRAINLVNANVVEANEIEQIIWDKYSSLDLALQQEIDWNTEIIKDTIKYMEFLVDLNARHSPREKLDKLSGFISNITCFAGDSIDLFTIDKFGALLWRLTWVSENNNALDSANLNEIIKRKGDFEPGTNTISFDNELGRNIRELLRQNKYSSNKETFPLWLREQMMYTFGQAGLWDRFWRDWQSILQSLNKTNERIYFWVVTALFLSKVDNRDALRHLFTKYWSNPSGASFVADYTTNNHQFNSDNERMALKSVLVQIGEKYNTSPWAREAAQFADNL</sequence>
<gene>
    <name type="primary">ATP25</name>
    <name type="ordered locus">CAALFM_CR03350CA</name>
    <name type="ORF">CaO19.2387</name>
    <name type="ORF">CaO19.9923</name>
</gene>
<protein>
    <recommendedName>
        <fullName>ATPase synthesis protein 25, mitochondrial</fullName>
    </recommendedName>
</protein>
<proteinExistence type="inferred from homology"/>
<accession>Q59UH7</accession>
<accession>A0A1D8PSG6</accession>
<comment type="function">
    <text evidence="1">Probable mitochondrial mRNA stabilization factor.</text>
</comment>
<comment type="subcellular location">
    <subcellularLocation>
        <location evidence="1">Mitochondrion inner membrane</location>
        <topology evidence="1">Peripheral membrane protein</topology>
        <orientation evidence="1">Matrix side</orientation>
    </subcellularLocation>
</comment>
<comment type="similarity">
    <text evidence="3">Belongs to the ATP25 family.</text>
</comment>
<name>ATP25_CANAL</name>
<evidence type="ECO:0000250" key="1"/>
<evidence type="ECO:0000255" key="2"/>
<evidence type="ECO:0000305" key="3"/>